<organism>
    <name type="scientific">Shigella flexneri</name>
    <dbReference type="NCBI Taxonomy" id="623"/>
    <lineage>
        <taxon>Bacteria</taxon>
        <taxon>Pseudomonadati</taxon>
        <taxon>Pseudomonadota</taxon>
        <taxon>Gammaproteobacteria</taxon>
        <taxon>Enterobacterales</taxon>
        <taxon>Enterobacteriaceae</taxon>
        <taxon>Shigella</taxon>
    </lineage>
</organism>
<feature type="chain" id="PRO_0000066510" description="Uncharacterized 10.4 kDa protein in spaT 3'region">
    <location>
        <begin position="1"/>
        <end position="89"/>
    </location>
</feature>
<keyword id="KW-0614">Plasmid</keyword>
<reference key="1">
    <citation type="journal article" date="1993" name="J. Bacteriol.">
        <title>Eight genes in region 5 that form an operon are essential for invasion of epithelial cells by Shigella flexneri 2a.</title>
        <authorList>
            <person name="Sasakawa C."/>
            <person name="Komatsu K."/>
            <person name="Tobe T."/>
            <person name="Suzuki T."/>
            <person name="Yoshikawa M."/>
        </authorList>
    </citation>
    <scope>NUCLEOTIDE SEQUENCE [GENOMIC DNA]</scope>
    <source>
        <strain>YSH6000 / Serotype 2a</strain>
        <plasmid>pMYSH6000</plasmid>
    </source>
</reference>
<reference key="2">
    <citation type="journal article" date="2000" name="Mol. Microbiol.">
        <title>The virulence plasmid pWR100 and the repertoire of proteins secreted by the type III secretion apparatus of Shigella flexneri.</title>
        <authorList>
            <person name="Buchrieser C."/>
            <person name="Glaser P."/>
            <person name="Rusniok C."/>
            <person name="Nedjari H."/>
            <person name="d'Hauteville H."/>
            <person name="Kunst F."/>
            <person name="Sansonetti P.J."/>
            <person name="Parsot C."/>
        </authorList>
    </citation>
    <scope>NUCLEOTIDE SEQUENCE [GENOMIC DNA]</scope>
    <source>
        <strain>M90T / Serotype 5a</strain>
        <plasmid>pWR100</plasmid>
    </source>
</reference>
<reference key="3">
    <citation type="journal article" date="2001" name="Infect. Immun.">
        <title>Complete DNA sequence and analysis of the large virulence plasmid of Shigella flexneri.</title>
        <authorList>
            <person name="Venkatesan M.M."/>
            <person name="Goldberg M.B."/>
            <person name="Rose D.J."/>
            <person name="Grotbeck E.J."/>
            <person name="Burland V."/>
            <person name="Blattner F.R."/>
        </authorList>
    </citation>
    <scope>NUCLEOTIDE SEQUENCE [GENOMIC DNA]</scope>
    <source>
        <strain>M90T / Serotype 5a</strain>
        <plasmid>pWR501</plasmid>
    </source>
</reference>
<reference key="4">
    <citation type="journal article" date="2003" name="Infect. Immun.">
        <title>Comparison of two major forms of the Shigella virulence plasmid pINV: positive selection is a major force driving the divergence.</title>
        <authorList>
            <person name="Lan R."/>
            <person name="Stevenson G."/>
            <person name="Reeves P.R."/>
        </authorList>
    </citation>
    <scope>NUCLEOTIDE SEQUENCE [GENOMIC DNA]</scope>
    <source>
        <strain>M1382 / Serotype 6</strain>
        <plasmid>pINV_F6_M1382</plasmid>
    </source>
</reference>
<dbReference type="EMBL" id="D13663">
    <property type="protein sequence ID" value="BAA02834.1"/>
    <property type="molecule type" value="Genomic_DNA"/>
</dbReference>
<dbReference type="EMBL" id="AL391753">
    <property type="protein sequence ID" value="CAC05833.1"/>
    <property type="molecule type" value="Genomic_DNA"/>
</dbReference>
<dbReference type="EMBL" id="AF348706">
    <property type="protein sequence ID" value="AAK18477.1"/>
    <property type="molecule type" value="Genomic_DNA"/>
</dbReference>
<dbReference type="EMBL" id="AY206439">
    <property type="protein sequence ID" value="AAP79021.1"/>
    <property type="molecule type" value="Genomic_DNA"/>
</dbReference>
<dbReference type="PIR" id="C38908">
    <property type="entry name" value="C38908"/>
</dbReference>
<dbReference type="RefSeq" id="NP_085321.1">
    <property type="nucleotide sequence ID" value="NC_002698.1"/>
</dbReference>
<dbReference type="RefSeq" id="YP_009062515.1">
    <property type="nucleotide sequence ID" value="NC_024996.1"/>
</dbReference>
<dbReference type="SMR" id="P55794"/>
<protein>
    <recommendedName>
        <fullName>Uncharacterized 10.4 kDa protein in spaT 3'region</fullName>
    </recommendedName>
    <alternativeName>
        <fullName>SPA-ORF11</fullName>
        <shortName>ORF-11</shortName>
    </alternativeName>
</protein>
<geneLocation type="plasmid">
    <name>pMYSH6000</name>
</geneLocation>
<geneLocation type="plasmid">
    <name>pWR100</name>
</geneLocation>
<geneLocation type="plasmid">
    <name>pWR501</name>
</geneLocation>
<geneLocation type="plasmid">
    <name>pINV_F6_M1382</name>
</geneLocation>
<sequence>MIRQQKRLTIILLLLGVDKRDYSSCNVKTLLYSIRDYAKSVNDHEILTESNRLLSHCISDSNGAFFKSSKYVPLKYLRKRRIARKIPND</sequence>
<name>YSPU_SHIFL</name>
<accession>P55794</accession>
<proteinExistence type="predicted"/>